<protein>
    <recommendedName>
        <fullName evidence="5">Kappa-sparatoxin-Hv1d</fullName>
        <shortName evidence="5">Kappa-SPRTX-Hv1d</shortName>
    </recommendedName>
    <alternativeName>
        <fullName evidence="4">Toxin AU2</fullName>
    </alternativeName>
</protein>
<name>TXU2_HETVE</name>
<evidence type="ECO:0000250" key="1"/>
<evidence type="ECO:0000250" key="2">
    <source>
        <dbReference type="UniProtKB" id="P58426"/>
    </source>
</evidence>
<evidence type="ECO:0000269" key="3">
    <source ref="1"/>
</evidence>
<evidence type="ECO:0000303" key="4">
    <source ref="1"/>
</evidence>
<evidence type="ECO:0000305" key="5"/>
<evidence type="ECO:0000305" key="6">
    <source ref="1"/>
</evidence>
<sequence length="30" mass="3325">DDCGGLFSGCDSNADCCEGYVCRLWCKYKL</sequence>
<dbReference type="SMR" id="P61792"/>
<dbReference type="ArachnoServer" id="AS000419">
    <property type="toxin name" value="kappa-sparatoxin-Hv1d"/>
</dbReference>
<dbReference type="GO" id="GO:0005576">
    <property type="term" value="C:extracellular region"/>
    <property type="evidence" value="ECO:0007669"/>
    <property type="project" value="UniProtKB-SubCell"/>
</dbReference>
<dbReference type="GO" id="GO:0005246">
    <property type="term" value="F:calcium channel regulator activity"/>
    <property type="evidence" value="ECO:0007669"/>
    <property type="project" value="UniProtKB-KW"/>
</dbReference>
<dbReference type="GO" id="GO:0008200">
    <property type="term" value="F:ion channel inhibitor activity"/>
    <property type="evidence" value="ECO:0007669"/>
    <property type="project" value="InterPro"/>
</dbReference>
<dbReference type="GO" id="GO:0015459">
    <property type="term" value="F:potassium channel regulator activity"/>
    <property type="evidence" value="ECO:0007669"/>
    <property type="project" value="UniProtKB-KW"/>
</dbReference>
<dbReference type="GO" id="GO:0090729">
    <property type="term" value="F:toxin activity"/>
    <property type="evidence" value="ECO:0007669"/>
    <property type="project" value="UniProtKB-KW"/>
</dbReference>
<dbReference type="InterPro" id="IPR011696">
    <property type="entry name" value="Huwentoxin-1"/>
</dbReference>
<dbReference type="Pfam" id="PF07740">
    <property type="entry name" value="Toxin_12"/>
    <property type="match status" value="1"/>
</dbReference>
<dbReference type="SUPFAM" id="SSF57059">
    <property type="entry name" value="omega toxin-like"/>
    <property type="match status" value="1"/>
</dbReference>
<comment type="function">
    <text evidence="1 3">Inhibitor of voltage-gated potassium channels of the Kv4/KCND family (By similarity). Blocks calcium channels (Cav).</text>
</comment>
<comment type="subcellular location">
    <subcellularLocation>
        <location evidence="3">Secreted</location>
    </subcellularLocation>
</comment>
<comment type="tissue specificity">
    <text evidence="6">Expressed by the venom gland.</text>
</comment>
<comment type="domain">
    <text evidence="2">The presence of a 'disulfide through disulfide knot' structurally defines this protein as a knottin.</text>
</comment>
<comment type="mass spectrometry" mass="3316.97" method="Electrospray" evidence="3"/>
<comment type="similarity">
    <text evidence="5">Belongs to the neurotoxin 10 (Hwtx-1) family. 19 (HpTX2) subfamily.</text>
</comment>
<feature type="peptide" id="PRO_0000044554" description="Kappa-sparatoxin-Hv1d" evidence="3">
    <location>
        <begin position="1"/>
        <end position="30"/>
    </location>
</feature>
<feature type="disulfide bond" evidence="2">
    <location>
        <begin position="3"/>
        <end position="17"/>
    </location>
</feature>
<feature type="disulfide bond" evidence="2">
    <location>
        <begin position="10"/>
        <end position="22"/>
    </location>
</feature>
<feature type="disulfide bond" evidence="2">
    <location>
        <begin position="16"/>
        <end position="26"/>
    </location>
</feature>
<accession>P61792</accession>
<proteinExistence type="evidence at protein level"/>
<reference key="1">
    <citation type="patent" date="1997-05-06" number="US5627154">
        <title>Calcium channel blocking polypeptides from Heteropoda venatoria.</title>
        <authorList>
            <person name="Kelbaugh P.R."/>
            <person name="Saccomano N.A."/>
            <person name="Volkmann R.A."/>
        </authorList>
    </citation>
    <scope>PROTEIN SEQUENCE</scope>
    <scope>FUNCTION</scope>
    <scope>SUBCELLULAR LOCATION</scope>
    <scope>MASS SPECTROMETRY</scope>
    <source>
        <tissue>Venom</tissue>
    </source>
</reference>
<keyword id="KW-0108">Calcium channel impairing toxin</keyword>
<keyword id="KW-0903">Direct protein sequencing</keyword>
<keyword id="KW-1015">Disulfide bond</keyword>
<keyword id="KW-0872">Ion channel impairing toxin</keyword>
<keyword id="KW-0960">Knottin</keyword>
<keyword id="KW-0528">Neurotoxin</keyword>
<keyword id="KW-0632">Potassium channel impairing toxin</keyword>
<keyword id="KW-0964">Secreted</keyword>
<keyword id="KW-0800">Toxin</keyword>
<keyword id="KW-1218">Voltage-gated calcium channel impairing toxin</keyword>
<keyword id="KW-1220">Voltage-gated potassium channel impairing toxin</keyword>
<organism>
    <name type="scientific">Heteropoda venatoria</name>
    <name type="common">Brown huntsman spider</name>
    <name type="synonym">Aranea venatoria</name>
    <dbReference type="NCBI Taxonomy" id="152925"/>
    <lineage>
        <taxon>Eukaryota</taxon>
        <taxon>Metazoa</taxon>
        <taxon>Ecdysozoa</taxon>
        <taxon>Arthropoda</taxon>
        <taxon>Chelicerata</taxon>
        <taxon>Arachnida</taxon>
        <taxon>Araneae</taxon>
        <taxon>Araneomorphae</taxon>
        <taxon>Entelegynae</taxon>
        <taxon>Dionycha</taxon>
        <taxon>Sparassidae</taxon>
        <taxon>Heteropoda</taxon>
    </lineage>
</organism>